<gene>
    <name type="primary">RCF1</name>
    <name type="synonym">AIM31</name>
    <name type="ordered locus">KLLA0B01672g</name>
</gene>
<accession>Q6CWT4</accession>
<evidence type="ECO:0000250" key="1"/>
<evidence type="ECO:0000255" key="2"/>
<evidence type="ECO:0000255" key="3">
    <source>
        <dbReference type="PROSITE-ProRule" id="PRU00836"/>
    </source>
</evidence>
<evidence type="ECO:0000256" key="4">
    <source>
        <dbReference type="SAM" id="MobiDB-lite"/>
    </source>
</evidence>
<evidence type="ECO:0000305" key="5"/>
<protein>
    <recommendedName>
        <fullName>Respiratory supercomplex factor 1, mitochondrial</fullName>
    </recommendedName>
</protein>
<feature type="chain" id="PRO_0000399634" description="Respiratory supercomplex factor 1, mitochondrial">
    <location>
        <begin position="1"/>
        <end position="158"/>
    </location>
</feature>
<feature type="transmembrane region" description="Helical" evidence="3">
    <location>
        <begin position="32"/>
        <end position="52"/>
    </location>
</feature>
<feature type="transmembrane region" description="Helical" evidence="3">
    <location>
        <begin position="68"/>
        <end position="88"/>
    </location>
</feature>
<feature type="domain" description="HIG1" evidence="3">
    <location>
        <begin position="5"/>
        <end position="96"/>
    </location>
</feature>
<feature type="region of interest" description="Disordered" evidence="4">
    <location>
        <begin position="128"/>
        <end position="158"/>
    </location>
</feature>
<feature type="coiled-coil region" evidence="2">
    <location>
        <begin position="88"/>
        <end position="158"/>
    </location>
</feature>
<proteinExistence type="inferred from homology"/>
<reference key="1">
    <citation type="journal article" date="2004" name="Nature">
        <title>Genome evolution in yeasts.</title>
        <authorList>
            <person name="Dujon B."/>
            <person name="Sherman D."/>
            <person name="Fischer G."/>
            <person name="Durrens P."/>
            <person name="Casaregola S."/>
            <person name="Lafontaine I."/>
            <person name="de Montigny J."/>
            <person name="Marck C."/>
            <person name="Neuveglise C."/>
            <person name="Talla E."/>
            <person name="Goffard N."/>
            <person name="Frangeul L."/>
            <person name="Aigle M."/>
            <person name="Anthouard V."/>
            <person name="Babour A."/>
            <person name="Barbe V."/>
            <person name="Barnay S."/>
            <person name="Blanchin S."/>
            <person name="Beckerich J.-M."/>
            <person name="Beyne E."/>
            <person name="Bleykasten C."/>
            <person name="Boisrame A."/>
            <person name="Boyer J."/>
            <person name="Cattolico L."/>
            <person name="Confanioleri F."/>
            <person name="de Daruvar A."/>
            <person name="Despons L."/>
            <person name="Fabre E."/>
            <person name="Fairhead C."/>
            <person name="Ferry-Dumazet H."/>
            <person name="Groppi A."/>
            <person name="Hantraye F."/>
            <person name="Hennequin C."/>
            <person name="Jauniaux N."/>
            <person name="Joyet P."/>
            <person name="Kachouri R."/>
            <person name="Kerrest A."/>
            <person name="Koszul R."/>
            <person name="Lemaire M."/>
            <person name="Lesur I."/>
            <person name="Ma L."/>
            <person name="Muller H."/>
            <person name="Nicaud J.-M."/>
            <person name="Nikolski M."/>
            <person name="Oztas S."/>
            <person name="Ozier-Kalogeropoulos O."/>
            <person name="Pellenz S."/>
            <person name="Potier S."/>
            <person name="Richard G.-F."/>
            <person name="Straub M.-L."/>
            <person name="Suleau A."/>
            <person name="Swennen D."/>
            <person name="Tekaia F."/>
            <person name="Wesolowski-Louvel M."/>
            <person name="Westhof E."/>
            <person name="Wirth B."/>
            <person name="Zeniou-Meyer M."/>
            <person name="Zivanovic Y."/>
            <person name="Bolotin-Fukuhara M."/>
            <person name="Thierry A."/>
            <person name="Bouchier C."/>
            <person name="Caudron B."/>
            <person name="Scarpelli C."/>
            <person name="Gaillardin C."/>
            <person name="Weissenbach J."/>
            <person name="Wincker P."/>
            <person name="Souciet J.-L."/>
        </authorList>
    </citation>
    <scope>NUCLEOTIDE SEQUENCE [LARGE SCALE GENOMIC DNA]</scope>
    <source>
        <strain>ATCC 8585 / CBS 2359 / DSM 70799 / NBRC 1267 / NRRL Y-1140 / WM37</strain>
    </source>
</reference>
<comment type="function">
    <text evidence="1">Cytochrome c oxidase subunit which plays a role in assembly of respiratory supercomplexes.</text>
</comment>
<comment type="subunit">
    <text evidence="1">Associates with the respiratory chain complex III/complex IV supercomplex.</text>
</comment>
<comment type="subcellular location">
    <subcellularLocation>
        <location evidence="3">Mitochondrion membrane</location>
        <topology evidence="3">Multi-pass membrane protein</topology>
    </subcellularLocation>
</comment>
<comment type="similarity">
    <text evidence="5">Belongs to the RCF1 family.</text>
</comment>
<dbReference type="EMBL" id="CR382122">
    <property type="protein sequence ID" value="CAH01998.1"/>
    <property type="molecule type" value="Genomic_DNA"/>
</dbReference>
<dbReference type="RefSeq" id="XP_451605.1">
    <property type="nucleotide sequence ID" value="XM_451605.1"/>
</dbReference>
<dbReference type="SMR" id="Q6CWT4"/>
<dbReference type="FunCoup" id="Q6CWT4">
    <property type="interactions" value="106"/>
</dbReference>
<dbReference type="STRING" id="284590.Q6CWT4"/>
<dbReference type="PaxDb" id="284590-Q6CWT4"/>
<dbReference type="KEGG" id="kla:KLLA0_B01672g"/>
<dbReference type="eggNOG" id="KOG4431">
    <property type="taxonomic scope" value="Eukaryota"/>
</dbReference>
<dbReference type="HOGENOM" id="CLU_087356_1_0_1"/>
<dbReference type="InParanoid" id="Q6CWT4"/>
<dbReference type="OMA" id="QRWIREL"/>
<dbReference type="Proteomes" id="UP000000598">
    <property type="component" value="Chromosome B"/>
</dbReference>
<dbReference type="GO" id="GO:0031966">
    <property type="term" value="C:mitochondrial membrane"/>
    <property type="evidence" value="ECO:0007669"/>
    <property type="project" value="UniProtKB-SubCell"/>
</dbReference>
<dbReference type="GO" id="GO:0097250">
    <property type="term" value="P:mitochondrial respirasome assembly"/>
    <property type="evidence" value="ECO:0007669"/>
    <property type="project" value="TreeGrafter"/>
</dbReference>
<dbReference type="Gene3D" id="6.10.140.1320">
    <property type="match status" value="1"/>
</dbReference>
<dbReference type="InterPro" id="IPR007667">
    <property type="entry name" value="Hypoxia_induced_domain"/>
</dbReference>
<dbReference type="InterPro" id="IPR050355">
    <property type="entry name" value="RCF1"/>
</dbReference>
<dbReference type="PANTHER" id="PTHR12297:SF3">
    <property type="entry name" value="HIG1 DOMAIN FAMILY MEMBER 1A"/>
    <property type="match status" value="1"/>
</dbReference>
<dbReference type="PANTHER" id="PTHR12297">
    <property type="entry name" value="HYPOXIA-INDUCBILE GENE 1 HIG1 -RELATED"/>
    <property type="match status" value="1"/>
</dbReference>
<dbReference type="Pfam" id="PF04588">
    <property type="entry name" value="HIG_1_N"/>
    <property type="match status" value="1"/>
</dbReference>
<dbReference type="PROSITE" id="PS51503">
    <property type="entry name" value="HIG1"/>
    <property type="match status" value="1"/>
</dbReference>
<sequence length="158" mass="18566">MSYLPSSFDSDADDLDEMPFLDKMIYHCKQQPLVPLGTLATTGAVLLAVLNVKNGNKRKAQIWFRWRVALQGFTLIALVAGSYIYGTNKNERESHEEQLRKKAKMREQLWIQELERRDEETKLRRQKAELARQKAKEMEQETSKLQQELKDLEERLKK</sequence>
<organism>
    <name type="scientific">Kluyveromyces lactis (strain ATCC 8585 / CBS 2359 / DSM 70799 / NBRC 1267 / NRRL Y-1140 / WM37)</name>
    <name type="common">Yeast</name>
    <name type="synonym">Candida sphaerica</name>
    <dbReference type="NCBI Taxonomy" id="284590"/>
    <lineage>
        <taxon>Eukaryota</taxon>
        <taxon>Fungi</taxon>
        <taxon>Dikarya</taxon>
        <taxon>Ascomycota</taxon>
        <taxon>Saccharomycotina</taxon>
        <taxon>Saccharomycetes</taxon>
        <taxon>Saccharomycetales</taxon>
        <taxon>Saccharomycetaceae</taxon>
        <taxon>Kluyveromyces</taxon>
    </lineage>
</organism>
<name>RCF1_KLULA</name>
<keyword id="KW-0175">Coiled coil</keyword>
<keyword id="KW-0472">Membrane</keyword>
<keyword id="KW-0496">Mitochondrion</keyword>
<keyword id="KW-1185">Reference proteome</keyword>
<keyword id="KW-0812">Transmembrane</keyword>
<keyword id="KW-1133">Transmembrane helix</keyword>